<reference key="1">
    <citation type="submission" date="2006-12" db="EMBL/GenBank/DDBJ databases">
        <title>Complete sequence of Chlorobium phaeobacteroides DSM 266.</title>
        <authorList>
            <consortium name="US DOE Joint Genome Institute"/>
            <person name="Copeland A."/>
            <person name="Lucas S."/>
            <person name="Lapidus A."/>
            <person name="Barry K."/>
            <person name="Detter J.C."/>
            <person name="Glavina del Rio T."/>
            <person name="Hammon N."/>
            <person name="Israni S."/>
            <person name="Pitluck S."/>
            <person name="Goltsman E."/>
            <person name="Schmutz J."/>
            <person name="Larimer F."/>
            <person name="Land M."/>
            <person name="Hauser L."/>
            <person name="Mikhailova N."/>
            <person name="Li T."/>
            <person name="Overmann J."/>
            <person name="Bryant D.A."/>
            <person name="Richardson P."/>
        </authorList>
    </citation>
    <scope>NUCLEOTIDE SEQUENCE [LARGE SCALE GENOMIC DNA]</scope>
    <source>
        <strain>DSM 266 / SMG 266 / 2430</strain>
    </source>
</reference>
<accession>A1BF35</accession>
<comment type="function">
    <text evidence="1">NDH-1 shuttles electrons from NADH, via FMN and iron-sulfur (Fe-S) centers, to quinones in the respiratory chain. The immediate electron acceptor for the enzyme in this species is believed to be a menaquinone. Couples the redox reaction to proton translocation (for every two electrons transferred, four hydrogen ions are translocated across the cytoplasmic membrane), and thus conserves the redox energy in a proton gradient.</text>
</comment>
<comment type="catalytic activity">
    <reaction evidence="1">
        <text>a quinone + NADH + 5 H(+)(in) = a quinol + NAD(+) + 4 H(+)(out)</text>
        <dbReference type="Rhea" id="RHEA:57888"/>
        <dbReference type="ChEBI" id="CHEBI:15378"/>
        <dbReference type="ChEBI" id="CHEBI:24646"/>
        <dbReference type="ChEBI" id="CHEBI:57540"/>
        <dbReference type="ChEBI" id="CHEBI:57945"/>
        <dbReference type="ChEBI" id="CHEBI:132124"/>
    </reaction>
</comment>
<comment type="subunit">
    <text evidence="1">NDH-1 is composed of 14 different subunits. Subunits NuoB, C, D, E, F, and G constitute the peripheral sector of the complex.</text>
</comment>
<comment type="subcellular location">
    <subcellularLocation>
        <location evidence="1">Cell inner membrane</location>
        <topology evidence="1">Peripheral membrane protein</topology>
        <orientation evidence="1">Cytoplasmic side</orientation>
    </subcellularLocation>
</comment>
<comment type="similarity">
    <text evidence="1">Belongs to the complex I 49 kDa subunit family.</text>
</comment>
<proteinExistence type="inferred from homology"/>
<protein>
    <recommendedName>
        <fullName evidence="1">NADH-quinone oxidoreductase subunit D</fullName>
        <ecNumber evidence="1">7.1.1.-</ecNumber>
    </recommendedName>
    <alternativeName>
        <fullName evidence="1">NADH dehydrogenase I subunit D</fullName>
    </alternativeName>
    <alternativeName>
        <fullName evidence="1">NDH-1 subunit D</fullName>
    </alternativeName>
</protein>
<sequence length="400" mass="45014">MQELGITGQGSVRVTRKEGNVVVLEKDLATEQMVLAMGPQHPSTHGVLKLECFTDGEVVTHAEPYLGYLHRCFEKHCEVVDYPGIVPYTDRMDYLAGMNSEWAYCLAVEKLLDLELPRRVEFIRVIVSELNRIASHLVAIGTYAIDLGAFTPFLFCFRDREHILSLLEWASGARMLYNYIWIGGLAYDVPADFNKRVKEFVDYFRPKAVELYQLLTENEIFVKRTKGIGIMPADVAINYGWSGPMLRGSGVQWDLRRNDPYSVYPELDFKVPIPDGKFSDVGDCLSRHLVRALEMDESLSIIEQCIDKMPGSEGFNPRAAVPKRVRAKAGEVYCRAENPRGELGFYIQSDGKSTKPLRCKARSSCFVNLSAMKDLSKGQLIPDLVAIIGSIDIVLGEVDR</sequence>
<dbReference type="EC" id="7.1.1.-" evidence="1"/>
<dbReference type="EMBL" id="CP000492">
    <property type="protein sequence ID" value="ABL65012.1"/>
    <property type="molecule type" value="Genomic_DNA"/>
</dbReference>
<dbReference type="RefSeq" id="WP_011744839.1">
    <property type="nucleotide sequence ID" value="NC_008639.1"/>
</dbReference>
<dbReference type="SMR" id="A1BF35"/>
<dbReference type="STRING" id="290317.Cpha266_0964"/>
<dbReference type="KEGG" id="cph:Cpha266_0964"/>
<dbReference type="eggNOG" id="COG0649">
    <property type="taxonomic scope" value="Bacteria"/>
</dbReference>
<dbReference type="HOGENOM" id="CLU_015134_1_2_10"/>
<dbReference type="OrthoDB" id="9801496at2"/>
<dbReference type="Proteomes" id="UP000008701">
    <property type="component" value="Chromosome"/>
</dbReference>
<dbReference type="GO" id="GO:0005886">
    <property type="term" value="C:plasma membrane"/>
    <property type="evidence" value="ECO:0007669"/>
    <property type="project" value="UniProtKB-SubCell"/>
</dbReference>
<dbReference type="GO" id="GO:0051287">
    <property type="term" value="F:NAD binding"/>
    <property type="evidence" value="ECO:0007669"/>
    <property type="project" value="InterPro"/>
</dbReference>
<dbReference type="GO" id="GO:0050136">
    <property type="term" value="F:NADH:ubiquinone reductase (non-electrogenic) activity"/>
    <property type="evidence" value="ECO:0007669"/>
    <property type="project" value="UniProtKB-UniRule"/>
</dbReference>
<dbReference type="GO" id="GO:0048038">
    <property type="term" value="F:quinone binding"/>
    <property type="evidence" value="ECO:0007669"/>
    <property type="project" value="UniProtKB-KW"/>
</dbReference>
<dbReference type="Gene3D" id="1.10.645.10">
    <property type="entry name" value="Cytochrome-c3 Hydrogenase, chain B"/>
    <property type="match status" value="1"/>
</dbReference>
<dbReference type="HAMAP" id="MF_01358">
    <property type="entry name" value="NDH1_NuoD"/>
    <property type="match status" value="1"/>
</dbReference>
<dbReference type="InterPro" id="IPR001135">
    <property type="entry name" value="NADH_Q_OxRdtase_suD"/>
</dbReference>
<dbReference type="InterPro" id="IPR022885">
    <property type="entry name" value="NDH1_su_D/H"/>
</dbReference>
<dbReference type="InterPro" id="IPR029014">
    <property type="entry name" value="NiFe-Hase_large"/>
</dbReference>
<dbReference type="PANTHER" id="PTHR11993:SF10">
    <property type="entry name" value="NADH DEHYDROGENASE [UBIQUINONE] IRON-SULFUR PROTEIN 2, MITOCHONDRIAL"/>
    <property type="match status" value="1"/>
</dbReference>
<dbReference type="PANTHER" id="PTHR11993">
    <property type="entry name" value="NADH-UBIQUINONE OXIDOREDUCTASE 49 KDA SUBUNIT"/>
    <property type="match status" value="1"/>
</dbReference>
<dbReference type="Pfam" id="PF00346">
    <property type="entry name" value="Complex1_49kDa"/>
    <property type="match status" value="1"/>
</dbReference>
<dbReference type="SUPFAM" id="SSF56762">
    <property type="entry name" value="HydB/Nqo4-like"/>
    <property type="match status" value="1"/>
</dbReference>
<name>NUOD_CHLPD</name>
<keyword id="KW-0997">Cell inner membrane</keyword>
<keyword id="KW-1003">Cell membrane</keyword>
<keyword id="KW-0472">Membrane</keyword>
<keyword id="KW-0520">NAD</keyword>
<keyword id="KW-0874">Quinone</keyword>
<keyword id="KW-1185">Reference proteome</keyword>
<keyword id="KW-1278">Translocase</keyword>
<keyword id="KW-0813">Transport</keyword>
<feature type="chain" id="PRO_0000357797" description="NADH-quinone oxidoreductase subunit D">
    <location>
        <begin position="1"/>
        <end position="400"/>
    </location>
</feature>
<gene>
    <name evidence="1" type="primary">nuoD</name>
    <name type="ordered locus">Cpha266_0964</name>
</gene>
<organism>
    <name type="scientific">Chlorobium phaeobacteroides (strain DSM 266 / SMG 266 / 2430)</name>
    <dbReference type="NCBI Taxonomy" id="290317"/>
    <lineage>
        <taxon>Bacteria</taxon>
        <taxon>Pseudomonadati</taxon>
        <taxon>Chlorobiota</taxon>
        <taxon>Chlorobiia</taxon>
        <taxon>Chlorobiales</taxon>
        <taxon>Chlorobiaceae</taxon>
        <taxon>Chlorobium/Pelodictyon group</taxon>
        <taxon>Chlorobium</taxon>
    </lineage>
</organism>
<evidence type="ECO:0000255" key="1">
    <source>
        <dbReference type="HAMAP-Rule" id="MF_01358"/>
    </source>
</evidence>